<feature type="chain" id="PRO_0000122549" description="Aminomethyltransferase">
    <location>
        <begin position="1"/>
        <end position="372"/>
    </location>
</feature>
<comment type="function">
    <text evidence="1">The glycine cleavage system catalyzes the degradation of glycine.</text>
</comment>
<comment type="catalytic activity">
    <reaction evidence="1">
        <text>N(6)-[(R)-S(8)-aminomethyldihydrolipoyl]-L-lysyl-[protein] + (6S)-5,6,7,8-tetrahydrofolate = N(6)-[(R)-dihydrolipoyl]-L-lysyl-[protein] + (6R)-5,10-methylene-5,6,7,8-tetrahydrofolate + NH4(+)</text>
        <dbReference type="Rhea" id="RHEA:16945"/>
        <dbReference type="Rhea" id="RHEA-COMP:10475"/>
        <dbReference type="Rhea" id="RHEA-COMP:10492"/>
        <dbReference type="ChEBI" id="CHEBI:15636"/>
        <dbReference type="ChEBI" id="CHEBI:28938"/>
        <dbReference type="ChEBI" id="CHEBI:57453"/>
        <dbReference type="ChEBI" id="CHEBI:83100"/>
        <dbReference type="ChEBI" id="CHEBI:83143"/>
        <dbReference type="EC" id="2.1.2.10"/>
    </reaction>
</comment>
<comment type="subunit">
    <text evidence="1">The glycine cleavage system is composed of four proteins: P, T, L and H.</text>
</comment>
<comment type="similarity">
    <text evidence="1">Belongs to the GcvT family.</text>
</comment>
<keyword id="KW-0032">Aminotransferase</keyword>
<keyword id="KW-1185">Reference proteome</keyword>
<keyword id="KW-0808">Transferase</keyword>
<sequence length="372" mass="40093">MTVLKTTPLHAAHRALNARMVDFGGWDMPVNYGSQIEEHQAVRTDAGMFDVSHMCVVDFTGPRVRAFFEHAIANNVAKLQTPGKALYSCLLNPQGGVIDDLIVYYFTEEFFRVVVNAGTAEKDIAWFNQLNEQGGFGLTIAPRRDFAIVAAQGPNARAKVWDTVPCARAATSELKPFNAAQVAGTPFGDLTVARTGYTGEDGFEIIVPATHVEALWNALAERGVRPCGLGARDTLRLEAGMNLYGQDMDESVSPLDAGLAWTVDLSAPRAFVGRDALEAHGSRAAFVGLILQKENGRAGGVLRAHQKVATPHGEGEITSGTFSPSMQESIAFARVPKDVAIGDTVHVQIRDKQLPARVVKLPFVRNGKVLAA</sequence>
<accession>Q62FM9</accession>
<name>GCST_BURMA</name>
<gene>
    <name evidence="1" type="primary">gcvT</name>
    <name type="ordered locus">BMA2994.1</name>
</gene>
<organism>
    <name type="scientific">Burkholderia mallei (strain ATCC 23344)</name>
    <dbReference type="NCBI Taxonomy" id="243160"/>
    <lineage>
        <taxon>Bacteria</taxon>
        <taxon>Pseudomonadati</taxon>
        <taxon>Pseudomonadota</taxon>
        <taxon>Betaproteobacteria</taxon>
        <taxon>Burkholderiales</taxon>
        <taxon>Burkholderiaceae</taxon>
        <taxon>Burkholderia</taxon>
        <taxon>pseudomallei group</taxon>
    </lineage>
</organism>
<proteinExistence type="inferred from homology"/>
<dbReference type="EC" id="2.1.2.10" evidence="1"/>
<dbReference type="EMBL" id="CP000010">
    <property type="protein sequence ID" value="AAU50158.1"/>
    <property type="molecule type" value="Genomic_DNA"/>
</dbReference>
<dbReference type="RefSeq" id="WP_004202927.1">
    <property type="nucleotide sequence ID" value="NC_006348.1"/>
</dbReference>
<dbReference type="RefSeq" id="YP_104498.1">
    <property type="nucleotide sequence ID" value="NC_006348.1"/>
</dbReference>
<dbReference type="SMR" id="Q62FM9"/>
<dbReference type="GeneID" id="93061983"/>
<dbReference type="KEGG" id="bma:BMA2994.1"/>
<dbReference type="PATRIC" id="fig|243160.12.peg.3072"/>
<dbReference type="eggNOG" id="COG0404">
    <property type="taxonomic scope" value="Bacteria"/>
</dbReference>
<dbReference type="HOGENOM" id="CLU_007884_10_2_4"/>
<dbReference type="Proteomes" id="UP000006693">
    <property type="component" value="Chromosome 1"/>
</dbReference>
<dbReference type="GO" id="GO:0005829">
    <property type="term" value="C:cytosol"/>
    <property type="evidence" value="ECO:0007669"/>
    <property type="project" value="TreeGrafter"/>
</dbReference>
<dbReference type="GO" id="GO:0005960">
    <property type="term" value="C:glycine cleavage complex"/>
    <property type="evidence" value="ECO:0007669"/>
    <property type="project" value="InterPro"/>
</dbReference>
<dbReference type="GO" id="GO:0004047">
    <property type="term" value="F:aminomethyltransferase activity"/>
    <property type="evidence" value="ECO:0007669"/>
    <property type="project" value="UniProtKB-UniRule"/>
</dbReference>
<dbReference type="GO" id="GO:0008483">
    <property type="term" value="F:transaminase activity"/>
    <property type="evidence" value="ECO:0007669"/>
    <property type="project" value="UniProtKB-KW"/>
</dbReference>
<dbReference type="GO" id="GO:0019464">
    <property type="term" value="P:glycine decarboxylation via glycine cleavage system"/>
    <property type="evidence" value="ECO:0007669"/>
    <property type="project" value="UniProtKB-UniRule"/>
</dbReference>
<dbReference type="FunFam" id="3.30.70.1400:FF:000001">
    <property type="entry name" value="Aminomethyltransferase"/>
    <property type="match status" value="1"/>
</dbReference>
<dbReference type="FunFam" id="4.10.1250.10:FF:000001">
    <property type="entry name" value="Aminomethyltransferase"/>
    <property type="match status" value="1"/>
</dbReference>
<dbReference type="Gene3D" id="2.40.30.110">
    <property type="entry name" value="Aminomethyltransferase beta-barrel domains"/>
    <property type="match status" value="1"/>
</dbReference>
<dbReference type="Gene3D" id="3.30.70.1400">
    <property type="entry name" value="Aminomethyltransferase beta-barrel domains"/>
    <property type="match status" value="1"/>
</dbReference>
<dbReference type="Gene3D" id="4.10.1250.10">
    <property type="entry name" value="Aminomethyltransferase fragment"/>
    <property type="match status" value="1"/>
</dbReference>
<dbReference type="Gene3D" id="3.30.1360.120">
    <property type="entry name" value="Probable tRNA modification gtpase trme, domain 1"/>
    <property type="match status" value="1"/>
</dbReference>
<dbReference type="HAMAP" id="MF_00259">
    <property type="entry name" value="GcvT"/>
    <property type="match status" value="1"/>
</dbReference>
<dbReference type="InterPro" id="IPR006223">
    <property type="entry name" value="GCS_T"/>
</dbReference>
<dbReference type="InterPro" id="IPR022903">
    <property type="entry name" value="GCS_T_bac"/>
</dbReference>
<dbReference type="InterPro" id="IPR013977">
    <property type="entry name" value="GCST_C"/>
</dbReference>
<dbReference type="InterPro" id="IPR006222">
    <property type="entry name" value="GCV_T_N"/>
</dbReference>
<dbReference type="InterPro" id="IPR028896">
    <property type="entry name" value="GcvT/YgfZ/DmdA"/>
</dbReference>
<dbReference type="InterPro" id="IPR029043">
    <property type="entry name" value="GcvT/YgfZ_C"/>
</dbReference>
<dbReference type="InterPro" id="IPR027266">
    <property type="entry name" value="TrmE/GcvT_dom1"/>
</dbReference>
<dbReference type="NCBIfam" id="TIGR00528">
    <property type="entry name" value="gcvT"/>
    <property type="match status" value="1"/>
</dbReference>
<dbReference type="NCBIfam" id="NF001567">
    <property type="entry name" value="PRK00389.1"/>
    <property type="match status" value="1"/>
</dbReference>
<dbReference type="PANTHER" id="PTHR43757">
    <property type="entry name" value="AMINOMETHYLTRANSFERASE"/>
    <property type="match status" value="1"/>
</dbReference>
<dbReference type="PANTHER" id="PTHR43757:SF2">
    <property type="entry name" value="AMINOMETHYLTRANSFERASE, MITOCHONDRIAL"/>
    <property type="match status" value="1"/>
</dbReference>
<dbReference type="Pfam" id="PF01571">
    <property type="entry name" value="GCV_T"/>
    <property type="match status" value="1"/>
</dbReference>
<dbReference type="Pfam" id="PF08669">
    <property type="entry name" value="GCV_T_C"/>
    <property type="match status" value="1"/>
</dbReference>
<dbReference type="PIRSF" id="PIRSF006487">
    <property type="entry name" value="GcvT"/>
    <property type="match status" value="1"/>
</dbReference>
<dbReference type="SUPFAM" id="SSF101790">
    <property type="entry name" value="Aminomethyltransferase beta-barrel domain"/>
    <property type="match status" value="1"/>
</dbReference>
<dbReference type="SUPFAM" id="SSF103025">
    <property type="entry name" value="Folate-binding domain"/>
    <property type="match status" value="1"/>
</dbReference>
<protein>
    <recommendedName>
        <fullName evidence="1">Aminomethyltransferase</fullName>
        <ecNumber evidence="1">2.1.2.10</ecNumber>
    </recommendedName>
    <alternativeName>
        <fullName evidence="1">Glycine cleavage system T protein</fullName>
    </alternativeName>
</protein>
<reference key="1">
    <citation type="journal article" date="2004" name="Proc. Natl. Acad. Sci. U.S.A.">
        <title>Structural flexibility in the Burkholderia mallei genome.</title>
        <authorList>
            <person name="Nierman W.C."/>
            <person name="DeShazer D."/>
            <person name="Kim H.S."/>
            <person name="Tettelin H."/>
            <person name="Nelson K.E."/>
            <person name="Feldblyum T.V."/>
            <person name="Ulrich R.L."/>
            <person name="Ronning C.M."/>
            <person name="Brinkac L.M."/>
            <person name="Daugherty S.C."/>
            <person name="Davidsen T.D."/>
            <person name="DeBoy R.T."/>
            <person name="Dimitrov G."/>
            <person name="Dodson R.J."/>
            <person name="Durkin A.S."/>
            <person name="Gwinn M.L."/>
            <person name="Haft D.H."/>
            <person name="Khouri H.M."/>
            <person name="Kolonay J.F."/>
            <person name="Madupu R."/>
            <person name="Mohammoud Y."/>
            <person name="Nelson W.C."/>
            <person name="Radune D."/>
            <person name="Romero C.M."/>
            <person name="Sarria S."/>
            <person name="Selengut J."/>
            <person name="Shamblin C."/>
            <person name="Sullivan S.A."/>
            <person name="White O."/>
            <person name="Yu Y."/>
            <person name="Zafar N."/>
            <person name="Zhou L."/>
            <person name="Fraser C.M."/>
        </authorList>
    </citation>
    <scope>NUCLEOTIDE SEQUENCE [LARGE SCALE GENOMIC DNA]</scope>
    <source>
        <strain>ATCC 23344</strain>
    </source>
</reference>
<evidence type="ECO:0000255" key="1">
    <source>
        <dbReference type="HAMAP-Rule" id="MF_00259"/>
    </source>
</evidence>